<gene>
    <name evidence="1" type="primary">rpmC</name>
    <name type="ordered locus">OEOE_0603</name>
</gene>
<organism>
    <name type="scientific">Oenococcus oeni (strain ATCC BAA-331 / PSU-1)</name>
    <dbReference type="NCBI Taxonomy" id="203123"/>
    <lineage>
        <taxon>Bacteria</taxon>
        <taxon>Bacillati</taxon>
        <taxon>Bacillota</taxon>
        <taxon>Bacilli</taxon>
        <taxon>Lactobacillales</taxon>
        <taxon>Lactobacillaceae</taxon>
        <taxon>Oenococcus</taxon>
    </lineage>
</organism>
<accession>Q04G77</accession>
<evidence type="ECO:0000255" key="1">
    <source>
        <dbReference type="HAMAP-Rule" id="MF_00374"/>
    </source>
</evidence>
<evidence type="ECO:0000305" key="2"/>
<sequence length="69" mass="7844">MKASEIKGLSRDDLLKREKDAKEELFNLRFQQAAGQLENTARLSTVKKDIARIKTELWAQEIAAEKAKA</sequence>
<name>RL29_OENOB</name>
<comment type="similarity">
    <text evidence="1">Belongs to the universal ribosomal protein uL29 family.</text>
</comment>
<feature type="chain" id="PRO_1000007544" description="Large ribosomal subunit protein uL29">
    <location>
        <begin position="1"/>
        <end position="69"/>
    </location>
</feature>
<proteinExistence type="inferred from homology"/>
<dbReference type="EMBL" id="CP000411">
    <property type="protein sequence ID" value="ABJ56545.1"/>
    <property type="molecule type" value="Genomic_DNA"/>
</dbReference>
<dbReference type="RefSeq" id="WP_002818463.1">
    <property type="nucleotide sequence ID" value="NC_008528.1"/>
</dbReference>
<dbReference type="SMR" id="Q04G77"/>
<dbReference type="STRING" id="203123.OEOE_0603"/>
<dbReference type="GeneID" id="75065425"/>
<dbReference type="KEGG" id="ooe:OEOE_0603"/>
<dbReference type="eggNOG" id="COG0255">
    <property type="taxonomic scope" value="Bacteria"/>
</dbReference>
<dbReference type="HOGENOM" id="CLU_158491_5_2_9"/>
<dbReference type="Proteomes" id="UP000000774">
    <property type="component" value="Chromosome"/>
</dbReference>
<dbReference type="GO" id="GO:0022625">
    <property type="term" value="C:cytosolic large ribosomal subunit"/>
    <property type="evidence" value="ECO:0007669"/>
    <property type="project" value="TreeGrafter"/>
</dbReference>
<dbReference type="GO" id="GO:0003735">
    <property type="term" value="F:structural constituent of ribosome"/>
    <property type="evidence" value="ECO:0007669"/>
    <property type="project" value="InterPro"/>
</dbReference>
<dbReference type="GO" id="GO:0006412">
    <property type="term" value="P:translation"/>
    <property type="evidence" value="ECO:0007669"/>
    <property type="project" value="UniProtKB-UniRule"/>
</dbReference>
<dbReference type="CDD" id="cd00427">
    <property type="entry name" value="Ribosomal_L29_HIP"/>
    <property type="match status" value="1"/>
</dbReference>
<dbReference type="FunFam" id="1.10.287.310:FF:000001">
    <property type="entry name" value="50S ribosomal protein L29"/>
    <property type="match status" value="1"/>
</dbReference>
<dbReference type="Gene3D" id="1.10.287.310">
    <property type="match status" value="1"/>
</dbReference>
<dbReference type="HAMAP" id="MF_00374">
    <property type="entry name" value="Ribosomal_uL29"/>
    <property type="match status" value="1"/>
</dbReference>
<dbReference type="InterPro" id="IPR050063">
    <property type="entry name" value="Ribosomal_protein_uL29"/>
</dbReference>
<dbReference type="InterPro" id="IPR001854">
    <property type="entry name" value="Ribosomal_uL29"/>
</dbReference>
<dbReference type="InterPro" id="IPR018254">
    <property type="entry name" value="Ribosomal_uL29_CS"/>
</dbReference>
<dbReference type="InterPro" id="IPR036049">
    <property type="entry name" value="Ribosomal_uL29_sf"/>
</dbReference>
<dbReference type="NCBIfam" id="TIGR00012">
    <property type="entry name" value="L29"/>
    <property type="match status" value="1"/>
</dbReference>
<dbReference type="PANTHER" id="PTHR10916">
    <property type="entry name" value="60S RIBOSOMAL PROTEIN L35/50S RIBOSOMAL PROTEIN L29"/>
    <property type="match status" value="1"/>
</dbReference>
<dbReference type="PANTHER" id="PTHR10916:SF0">
    <property type="entry name" value="LARGE RIBOSOMAL SUBUNIT PROTEIN UL29C"/>
    <property type="match status" value="1"/>
</dbReference>
<dbReference type="Pfam" id="PF00831">
    <property type="entry name" value="Ribosomal_L29"/>
    <property type="match status" value="1"/>
</dbReference>
<dbReference type="SUPFAM" id="SSF46561">
    <property type="entry name" value="Ribosomal protein L29 (L29p)"/>
    <property type="match status" value="1"/>
</dbReference>
<dbReference type="PROSITE" id="PS00579">
    <property type="entry name" value="RIBOSOMAL_L29"/>
    <property type="match status" value="1"/>
</dbReference>
<reference key="1">
    <citation type="journal article" date="2006" name="Proc. Natl. Acad. Sci. U.S.A.">
        <title>Comparative genomics of the lactic acid bacteria.</title>
        <authorList>
            <person name="Makarova K.S."/>
            <person name="Slesarev A."/>
            <person name="Wolf Y.I."/>
            <person name="Sorokin A."/>
            <person name="Mirkin B."/>
            <person name="Koonin E.V."/>
            <person name="Pavlov A."/>
            <person name="Pavlova N."/>
            <person name="Karamychev V."/>
            <person name="Polouchine N."/>
            <person name="Shakhova V."/>
            <person name="Grigoriev I."/>
            <person name="Lou Y."/>
            <person name="Rohksar D."/>
            <person name="Lucas S."/>
            <person name="Huang K."/>
            <person name="Goodstein D.M."/>
            <person name="Hawkins T."/>
            <person name="Plengvidhya V."/>
            <person name="Welker D."/>
            <person name="Hughes J."/>
            <person name="Goh Y."/>
            <person name="Benson A."/>
            <person name="Baldwin K."/>
            <person name="Lee J.-H."/>
            <person name="Diaz-Muniz I."/>
            <person name="Dosti B."/>
            <person name="Smeianov V."/>
            <person name="Wechter W."/>
            <person name="Barabote R."/>
            <person name="Lorca G."/>
            <person name="Altermann E."/>
            <person name="Barrangou R."/>
            <person name="Ganesan B."/>
            <person name="Xie Y."/>
            <person name="Rawsthorne H."/>
            <person name="Tamir D."/>
            <person name="Parker C."/>
            <person name="Breidt F."/>
            <person name="Broadbent J.R."/>
            <person name="Hutkins R."/>
            <person name="O'Sullivan D."/>
            <person name="Steele J."/>
            <person name="Unlu G."/>
            <person name="Saier M.H. Jr."/>
            <person name="Klaenhammer T."/>
            <person name="Richardson P."/>
            <person name="Kozyavkin S."/>
            <person name="Weimer B.C."/>
            <person name="Mills D.A."/>
        </authorList>
    </citation>
    <scope>NUCLEOTIDE SEQUENCE [LARGE SCALE GENOMIC DNA]</scope>
    <source>
        <strain>ATCC BAA-331 / PSU-1</strain>
    </source>
</reference>
<protein>
    <recommendedName>
        <fullName evidence="1">Large ribosomal subunit protein uL29</fullName>
    </recommendedName>
    <alternativeName>
        <fullName evidence="2">50S ribosomal protein L29</fullName>
    </alternativeName>
</protein>
<keyword id="KW-1185">Reference proteome</keyword>
<keyword id="KW-0687">Ribonucleoprotein</keyword>
<keyword id="KW-0689">Ribosomal protein</keyword>